<reference key="1">
    <citation type="journal article" date="2000" name="Nature">
        <title>The genome sequence of the plant pathogen Xylella fastidiosa.</title>
        <authorList>
            <person name="Simpson A.J.G."/>
            <person name="Reinach F.C."/>
            <person name="Arruda P."/>
            <person name="Abreu F.A."/>
            <person name="Acencio M."/>
            <person name="Alvarenga R."/>
            <person name="Alves L.M.C."/>
            <person name="Araya J.E."/>
            <person name="Baia G.S."/>
            <person name="Baptista C.S."/>
            <person name="Barros M.H."/>
            <person name="Bonaccorsi E.D."/>
            <person name="Bordin S."/>
            <person name="Bove J.M."/>
            <person name="Briones M.R.S."/>
            <person name="Bueno M.R.P."/>
            <person name="Camargo A.A."/>
            <person name="Camargo L.E.A."/>
            <person name="Carraro D.M."/>
            <person name="Carrer H."/>
            <person name="Colauto N.B."/>
            <person name="Colombo C."/>
            <person name="Costa F.F."/>
            <person name="Costa M.C.R."/>
            <person name="Costa-Neto C.M."/>
            <person name="Coutinho L.L."/>
            <person name="Cristofani M."/>
            <person name="Dias-Neto E."/>
            <person name="Docena C."/>
            <person name="El-Dorry H."/>
            <person name="Facincani A.P."/>
            <person name="Ferreira A.J.S."/>
            <person name="Ferreira V.C.A."/>
            <person name="Ferro J.A."/>
            <person name="Fraga J.S."/>
            <person name="Franca S.C."/>
            <person name="Franco M.C."/>
            <person name="Frohme M."/>
            <person name="Furlan L.R."/>
            <person name="Garnier M."/>
            <person name="Goldman G.H."/>
            <person name="Goldman M.H.S."/>
            <person name="Gomes S.L."/>
            <person name="Gruber A."/>
            <person name="Ho P.L."/>
            <person name="Hoheisel J.D."/>
            <person name="Junqueira M.L."/>
            <person name="Kemper E.L."/>
            <person name="Kitajima J.P."/>
            <person name="Krieger J.E."/>
            <person name="Kuramae E.E."/>
            <person name="Laigret F."/>
            <person name="Lambais M.R."/>
            <person name="Leite L.C.C."/>
            <person name="Lemos E.G.M."/>
            <person name="Lemos M.V.F."/>
            <person name="Lopes S.A."/>
            <person name="Lopes C.R."/>
            <person name="Machado J.A."/>
            <person name="Machado M.A."/>
            <person name="Madeira A.M.B.N."/>
            <person name="Madeira H.M.F."/>
            <person name="Marino C.L."/>
            <person name="Marques M.V."/>
            <person name="Martins E.A.L."/>
            <person name="Martins E.M.F."/>
            <person name="Matsukuma A.Y."/>
            <person name="Menck C.F.M."/>
            <person name="Miracca E.C."/>
            <person name="Miyaki C.Y."/>
            <person name="Monteiro-Vitorello C.B."/>
            <person name="Moon D.H."/>
            <person name="Nagai M.A."/>
            <person name="Nascimento A.L.T.O."/>
            <person name="Netto L.E.S."/>
            <person name="Nhani A. Jr."/>
            <person name="Nobrega F.G."/>
            <person name="Nunes L.R."/>
            <person name="Oliveira M.A."/>
            <person name="de Oliveira M.C."/>
            <person name="de Oliveira R.C."/>
            <person name="Palmieri D.A."/>
            <person name="Paris A."/>
            <person name="Peixoto B.R."/>
            <person name="Pereira G.A.G."/>
            <person name="Pereira H.A. Jr."/>
            <person name="Pesquero J.B."/>
            <person name="Quaggio R.B."/>
            <person name="Roberto P.G."/>
            <person name="Rodrigues V."/>
            <person name="de Rosa A.J.M."/>
            <person name="de Rosa V.E. Jr."/>
            <person name="de Sa R.G."/>
            <person name="Santelli R.V."/>
            <person name="Sawasaki H.E."/>
            <person name="da Silva A.C.R."/>
            <person name="da Silva A.M."/>
            <person name="da Silva F.R."/>
            <person name="Silva W.A. Jr."/>
            <person name="da Silveira J.F."/>
            <person name="Silvestri M.L.Z."/>
            <person name="Siqueira W.J."/>
            <person name="de Souza A.A."/>
            <person name="de Souza A.P."/>
            <person name="Terenzi M.F."/>
            <person name="Truffi D."/>
            <person name="Tsai S.M."/>
            <person name="Tsuhako M.H."/>
            <person name="Vallada H."/>
            <person name="Van Sluys M.A."/>
            <person name="Verjovski-Almeida S."/>
            <person name="Vettore A.L."/>
            <person name="Zago M.A."/>
            <person name="Zatz M."/>
            <person name="Meidanis J."/>
            <person name="Setubal J.C."/>
        </authorList>
    </citation>
    <scope>NUCLEOTIDE SEQUENCE [LARGE SCALE GENOMIC DNA]</scope>
    <source>
        <strain>9a5c</strain>
    </source>
</reference>
<feature type="chain" id="PRO_0000063107" description="Putative pterin-4-alpha-carbinolamine dehydratase">
    <location>
        <begin position="1"/>
        <end position="116"/>
    </location>
</feature>
<name>PHS_XYLFA</name>
<protein>
    <recommendedName>
        <fullName>Putative pterin-4-alpha-carbinolamine dehydratase</fullName>
        <shortName>PHS</shortName>
        <ecNumber>4.2.1.96</ecNumber>
    </recommendedName>
    <alternativeName>
        <fullName>4-alpha-hydroxy-tetrahydropterin dehydratase</fullName>
    </alternativeName>
    <alternativeName>
        <fullName>Pterin carbinolamine dehydratase</fullName>
        <shortName>PCD</shortName>
    </alternativeName>
</protein>
<accession>Q9PAB4</accession>
<evidence type="ECO:0000305" key="1"/>
<comment type="catalytic activity">
    <reaction>
        <text>(4aS,6R)-4a-hydroxy-L-erythro-5,6,7,8-tetrahydrobiopterin = (6R)-L-erythro-6,7-dihydrobiopterin + H2O</text>
        <dbReference type="Rhea" id="RHEA:11920"/>
        <dbReference type="ChEBI" id="CHEBI:15377"/>
        <dbReference type="ChEBI" id="CHEBI:15642"/>
        <dbReference type="ChEBI" id="CHEBI:43120"/>
        <dbReference type="EC" id="4.2.1.96"/>
    </reaction>
</comment>
<comment type="similarity">
    <text evidence="1">Belongs to the pterin-4-alpha-carbinolamine dehydratase family.</text>
</comment>
<organism>
    <name type="scientific">Xylella fastidiosa (strain 9a5c)</name>
    <dbReference type="NCBI Taxonomy" id="160492"/>
    <lineage>
        <taxon>Bacteria</taxon>
        <taxon>Pseudomonadati</taxon>
        <taxon>Pseudomonadota</taxon>
        <taxon>Gammaproteobacteria</taxon>
        <taxon>Lysobacterales</taxon>
        <taxon>Lysobacteraceae</taxon>
        <taxon>Xylella</taxon>
    </lineage>
</organism>
<gene>
    <name type="ordered locus">XF_2604</name>
</gene>
<proteinExistence type="inferred from homology"/>
<dbReference type="EC" id="4.2.1.96"/>
<dbReference type="EMBL" id="AE003849">
    <property type="protein sequence ID" value="AAF85401.1"/>
    <property type="molecule type" value="Genomic_DNA"/>
</dbReference>
<dbReference type="PIR" id="G82537">
    <property type="entry name" value="G82537"/>
</dbReference>
<dbReference type="RefSeq" id="WP_010895022.1">
    <property type="nucleotide sequence ID" value="NC_002488.3"/>
</dbReference>
<dbReference type="SMR" id="Q9PAB4"/>
<dbReference type="STRING" id="160492.XF_2604"/>
<dbReference type="KEGG" id="xfa:XF_2604"/>
<dbReference type="eggNOG" id="COG2154">
    <property type="taxonomic scope" value="Bacteria"/>
</dbReference>
<dbReference type="HOGENOM" id="CLU_081974_2_1_6"/>
<dbReference type="Proteomes" id="UP000000812">
    <property type="component" value="Chromosome"/>
</dbReference>
<dbReference type="GO" id="GO:0008124">
    <property type="term" value="F:4-alpha-hydroxytetrahydrobiopterin dehydratase activity"/>
    <property type="evidence" value="ECO:0007669"/>
    <property type="project" value="UniProtKB-UniRule"/>
</dbReference>
<dbReference type="GO" id="GO:0006729">
    <property type="term" value="P:tetrahydrobiopterin biosynthetic process"/>
    <property type="evidence" value="ECO:0007669"/>
    <property type="project" value="InterPro"/>
</dbReference>
<dbReference type="CDD" id="cd00913">
    <property type="entry name" value="PCD_DCoH_subfamily_a"/>
    <property type="match status" value="1"/>
</dbReference>
<dbReference type="Gene3D" id="3.30.1360.20">
    <property type="entry name" value="Transcriptional coactivator/pterin dehydratase"/>
    <property type="match status" value="1"/>
</dbReference>
<dbReference type="HAMAP" id="MF_00434">
    <property type="entry name" value="Pterin_4_alpha"/>
    <property type="match status" value="1"/>
</dbReference>
<dbReference type="InterPro" id="IPR036428">
    <property type="entry name" value="PCD_sf"/>
</dbReference>
<dbReference type="InterPro" id="IPR001533">
    <property type="entry name" value="Pterin_deHydtase"/>
</dbReference>
<dbReference type="NCBIfam" id="NF002019">
    <property type="entry name" value="PRK00823.1-4"/>
    <property type="match status" value="1"/>
</dbReference>
<dbReference type="PANTHER" id="PTHR12599">
    <property type="entry name" value="PTERIN-4-ALPHA-CARBINOLAMINE DEHYDRATASE"/>
    <property type="match status" value="1"/>
</dbReference>
<dbReference type="PANTHER" id="PTHR12599:SF0">
    <property type="entry name" value="PTERIN-4-ALPHA-CARBINOLAMINE DEHYDRATASE"/>
    <property type="match status" value="1"/>
</dbReference>
<dbReference type="Pfam" id="PF01329">
    <property type="entry name" value="Pterin_4a"/>
    <property type="match status" value="1"/>
</dbReference>
<dbReference type="SUPFAM" id="SSF55248">
    <property type="entry name" value="PCD-like"/>
    <property type="match status" value="1"/>
</dbReference>
<sequence length="116" mass="13068">MNDLITLAQAHCQPREKKEHKLGQARLAELLPQVPGWELSNNGHALTRTFRFDNYYRTLAFVNALAFIAHCEDHHPDMSVHYGRAVVCFSTHKIGGISENDFICAAKTSALYEQGI</sequence>
<keyword id="KW-0456">Lyase</keyword>